<evidence type="ECO:0000255" key="1">
    <source>
        <dbReference type="HAMAP-Rule" id="MF_01727"/>
    </source>
</evidence>
<comment type="function">
    <text evidence="1">Part of the ABC transporter complex UgpBAEC involved in sn-glycerol-3-phosphate (G3P) import. Responsible for energy coupling to the transport system.</text>
</comment>
<comment type="catalytic activity">
    <reaction evidence="1">
        <text>sn-glycerol 3-phosphate(out) + ATP + H2O = sn-glycerol 3-phosphate(in) + ADP + phosphate + H(+)</text>
        <dbReference type="Rhea" id="RHEA:21668"/>
        <dbReference type="ChEBI" id="CHEBI:15377"/>
        <dbReference type="ChEBI" id="CHEBI:15378"/>
        <dbReference type="ChEBI" id="CHEBI:30616"/>
        <dbReference type="ChEBI" id="CHEBI:43474"/>
        <dbReference type="ChEBI" id="CHEBI:57597"/>
        <dbReference type="ChEBI" id="CHEBI:456216"/>
        <dbReference type="EC" id="7.6.2.10"/>
    </reaction>
</comment>
<comment type="subunit">
    <text evidence="1">The complex is composed of two ATP-binding proteins (UgpC), two transmembrane proteins (UgpA and UgpE) and a solute-binding protein (UgpB).</text>
</comment>
<comment type="subcellular location">
    <subcellularLocation>
        <location evidence="1">Cell inner membrane</location>
        <topology evidence="1">Peripheral membrane protein</topology>
    </subcellularLocation>
</comment>
<comment type="similarity">
    <text evidence="1">Belongs to the ABC transporter superfamily. sn-glycerol-3-phosphate importer (TC 3.A.1.1.3) family.</text>
</comment>
<dbReference type="EC" id="7.6.2.10" evidence="1"/>
<dbReference type="EMBL" id="AE007870">
    <property type="protein sequence ID" value="AAK90198.1"/>
    <property type="molecule type" value="Genomic_DNA"/>
</dbReference>
<dbReference type="PIR" id="AF2948">
    <property type="entry name" value="AF2948"/>
</dbReference>
<dbReference type="PIR" id="D98334">
    <property type="entry name" value="D98334"/>
</dbReference>
<dbReference type="RefSeq" id="NP_357413.1">
    <property type="nucleotide sequence ID" value="NC_003063.2"/>
</dbReference>
<dbReference type="RefSeq" id="WP_010972832.1">
    <property type="nucleotide sequence ID" value="NC_003063.2"/>
</dbReference>
<dbReference type="SMR" id="Q8UB29"/>
<dbReference type="STRING" id="176299.Atu3188"/>
<dbReference type="EnsemblBacteria" id="AAK90198">
    <property type="protein sequence ID" value="AAK90198"/>
    <property type="gene ID" value="Atu3188"/>
</dbReference>
<dbReference type="GeneID" id="1134990"/>
<dbReference type="KEGG" id="atu:Atu3188"/>
<dbReference type="PATRIC" id="fig|176299.10.peg.3033"/>
<dbReference type="eggNOG" id="COG3842">
    <property type="taxonomic scope" value="Bacteria"/>
</dbReference>
<dbReference type="HOGENOM" id="CLU_000604_1_1_5"/>
<dbReference type="OrthoDB" id="394852at2"/>
<dbReference type="PhylomeDB" id="Q8UB29"/>
<dbReference type="BioCyc" id="AGRO:ATU3188-MONOMER"/>
<dbReference type="Proteomes" id="UP000000813">
    <property type="component" value="Chromosome linear"/>
</dbReference>
<dbReference type="GO" id="GO:0055052">
    <property type="term" value="C:ATP-binding cassette (ABC) transporter complex, substrate-binding subunit-containing"/>
    <property type="evidence" value="ECO:0007669"/>
    <property type="project" value="TreeGrafter"/>
</dbReference>
<dbReference type="GO" id="GO:0015430">
    <property type="term" value="F:ABC-type glycerol-3-phosphate transporter activity"/>
    <property type="evidence" value="ECO:0007669"/>
    <property type="project" value="UniProtKB-EC"/>
</dbReference>
<dbReference type="GO" id="GO:0005524">
    <property type="term" value="F:ATP binding"/>
    <property type="evidence" value="ECO:0007669"/>
    <property type="project" value="UniProtKB-KW"/>
</dbReference>
<dbReference type="GO" id="GO:0016887">
    <property type="term" value="F:ATP hydrolysis activity"/>
    <property type="evidence" value="ECO:0007669"/>
    <property type="project" value="InterPro"/>
</dbReference>
<dbReference type="GO" id="GO:0008643">
    <property type="term" value="P:carbohydrate transport"/>
    <property type="evidence" value="ECO:0007669"/>
    <property type="project" value="InterPro"/>
</dbReference>
<dbReference type="GO" id="GO:0001407">
    <property type="term" value="P:glycerophosphodiester transmembrane transport"/>
    <property type="evidence" value="ECO:0007669"/>
    <property type="project" value="TreeGrafter"/>
</dbReference>
<dbReference type="CDD" id="cd03301">
    <property type="entry name" value="ABC_MalK_N"/>
    <property type="match status" value="1"/>
</dbReference>
<dbReference type="FunFam" id="3.40.50.300:FF:000042">
    <property type="entry name" value="Maltose/maltodextrin ABC transporter, ATP-binding protein"/>
    <property type="match status" value="1"/>
</dbReference>
<dbReference type="Gene3D" id="2.40.50.100">
    <property type="match status" value="1"/>
</dbReference>
<dbReference type="Gene3D" id="2.40.50.140">
    <property type="entry name" value="Nucleic acid-binding proteins"/>
    <property type="match status" value="1"/>
</dbReference>
<dbReference type="Gene3D" id="3.40.50.300">
    <property type="entry name" value="P-loop containing nucleotide triphosphate hydrolases"/>
    <property type="match status" value="1"/>
</dbReference>
<dbReference type="InterPro" id="IPR003593">
    <property type="entry name" value="AAA+_ATPase"/>
</dbReference>
<dbReference type="InterPro" id="IPR003439">
    <property type="entry name" value="ABC_transporter-like_ATP-bd"/>
</dbReference>
<dbReference type="InterPro" id="IPR017871">
    <property type="entry name" value="ABC_transporter-like_CS"/>
</dbReference>
<dbReference type="InterPro" id="IPR015855">
    <property type="entry name" value="ABC_transpr_MalK-like"/>
</dbReference>
<dbReference type="InterPro" id="IPR047641">
    <property type="entry name" value="ABC_transpr_MalK/UgpC-like"/>
</dbReference>
<dbReference type="InterPro" id="IPR008995">
    <property type="entry name" value="Mo/tungstate-bd_C_term_dom"/>
</dbReference>
<dbReference type="InterPro" id="IPR012340">
    <property type="entry name" value="NA-bd_OB-fold"/>
</dbReference>
<dbReference type="InterPro" id="IPR027417">
    <property type="entry name" value="P-loop_NTPase"/>
</dbReference>
<dbReference type="InterPro" id="IPR013611">
    <property type="entry name" value="Transp-assoc_OB_typ2"/>
</dbReference>
<dbReference type="NCBIfam" id="NF008653">
    <property type="entry name" value="PRK11650.1"/>
    <property type="match status" value="1"/>
</dbReference>
<dbReference type="PANTHER" id="PTHR43875">
    <property type="entry name" value="MALTODEXTRIN IMPORT ATP-BINDING PROTEIN MSMX"/>
    <property type="match status" value="1"/>
</dbReference>
<dbReference type="PANTHER" id="PTHR43875:SF12">
    <property type="entry name" value="SN-GLYCEROL-3-PHOSPHATE IMPORT ATP-BINDING PROTEIN UGPC"/>
    <property type="match status" value="1"/>
</dbReference>
<dbReference type="Pfam" id="PF00005">
    <property type="entry name" value="ABC_tran"/>
    <property type="match status" value="1"/>
</dbReference>
<dbReference type="Pfam" id="PF08402">
    <property type="entry name" value="TOBE_2"/>
    <property type="match status" value="1"/>
</dbReference>
<dbReference type="SMART" id="SM00382">
    <property type="entry name" value="AAA"/>
    <property type="match status" value="1"/>
</dbReference>
<dbReference type="SUPFAM" id="SSF50331">
    <property type="entry name" value="MOP-like"/>
    <property type="match status" value="1"/>
</dbReference>
<dbReference type="SUPFAM" id="SSF52540">
    <property type="entry name" value="P-loop containing nucleoside triphosphate hydrolases"/>
    <property type="match status" value="1"/>
</dbReference>
<dbReference type="PROSITE" id="PS00211">
    <property type="entry name" value="ABC_TRANSPORTER_1"/>
    <property type="match status" value="1"/>
</dbReference>
<dbReference type="PROSITE" id="PS50893">
    <property type="entry name" value="ABC_TRANSPORTER_2"/>
    <property type="match status" value="1"/>
</dbReference>
<dbReference type="PROSITE" id="PS51315">
    <property type="entry name" value="UGPC"/>
    <property type="match status" value="1"/>
</dbReference>
<reference key="1">
    <citation type="journal article" date="2001" name="Science">
        <title>The genome of the natural genetic engineer Agrobacterium tumefaciens C58.</title>
        <authorList>
            <person name="Wood D.W."/>
            <person name="Setubal J.C."/>
            <person name="Kaul R."/>
            <person name="Monks D.E."/>
            <person name="Kitajima J.P."/>
            <person name="Okura V.K."/>
            <person name="Zhou Y."/>
            <person name="Chen L."/>
            <person name="Wood G.E."/>
            <person name="Almeida N.F. Jr."/>
            <person name="Woo L."/>
            <person name="Chen Y."/>
            <person name="Paulsen I.T."/>
            <person name="Eisen J.A."/>
            <person name="Karp P.D."/>
            <person name="Bovee D. Sr."/>
            <person name="Chapman P."/>
            <person name="Clendenning J."/>
            <person name="Deatherage G."/>
            <person name="Gillet W."/>
            <person name="Grant C."/>
            <person name="Kutyavin T."/>
            <person name="Levy R."/>
            <person name="Li M.-J."/>
            <person name="McClelland E."/>
            <person name="Palmieri A."/>
            <person name="Raymond C."/>
            <person name="Rouse G."/>
            <person name="Saenphimmachak C."/>
            <person name="Wu Z."/>
            <person name="Romero P."/>
            <person name="Gordon D."/>
            <person name="Zhang S."/>
            <person name="Yoo H."/>
            <person name="Tao Y."/>
            <person name="Biddle P."/>
            <person name="Jung M."/>
            <person name="Krespan W."/>
            <person name="Perry M."/>
            <person name="Gordon-Kamm B."/>
            <person name="Liao L."/>
            <person name="Kim S."/>
            <person name="Hendrick C."/>
            <person name="Zhao Z.-Y."/>
            <person name="Dolan M."/>
            <person name="Chumley F."/>
            <person name="Tingey S.V."/>
            <person name="Tomb J.-F."/>
            <person name="Gordon M.P."/>
            <person name="Olson M.V."/>
            <person name="Nester E.W."/>
        </authorList>
    </citation>
    <scope>NUCLEOTIDE SEQUENCE [LARGE SCALE GENOMIC DNA]</scope>
    <source>
        <strain>C58 / ATCC 33970</strain>
    </source>
</reference>
<reference key="2">
    <citation type="journal article" date="2001" name="Science">
        <title>Genome sequence of the plant pathogen and biotechnology agent Agrobacterium tumefaciens C58.</title>
        <authorList>
            <person name="Goodner B."/>
            <person name="Hinkle G."/>
            <person name="Gattung S."/>
            <person name="Miller N."/>
            <person name="Blanchard M."/>
            <person name="Qurollo B."/>
            <person name="Goldman B.S."/>
            <person name="Cao Y."/>
            <person name="Askenazi M."/>
            <person name="Halling C."/>
            <person name="Mullin L."/>
            <person name="Houmiel K."/>
            <person name="Gordon J."/>
            <person name="Vaudin M."/>
            <person name="Iartchouk O."/>
            <person name="Epp A."/>
            <person name="Liu F."/>
            <person name="Wollam C."/>
            <person name="Allinger M."/>
            <person name="Doughty D."/>
            <person name="Scott C."/>
            <person name="Lappas C."/>
            <person name="Markelz B."/>
            <person name="Flanagan C."/>
            <person name="Crowell C."/>
            <person name="Gurson J."/>
            <person name="Lomo C."/>
            <person name="Sear C."/>
            <person name="Strub G."/>
            <person name="Cielo C."/>
            <person name="Slater S."/>
        </authorList>
    </citation>
    <scope>NUCLEOTIDE SEQUENCE [LARGE SCALE GENOMIC DNA]</scope>
    <source>
        <strain>C58 / ATCC 33970</strain>
    </source>
</reference>
<protein>
    <recommendedName>
        <fullName evidence="1">sn-glycerol-3-phosphate import ATP-binding protein UgpC 3</fullName>
        <ecNumber evidence="1">7.6.2.10</ecNumber>
    </recommendedName>
</protein>
<accession>Q8UB29</accession>
<accession>Q7CRU5</accession>
<gene>
    <name evidence="1" type="primary">ugpC3</name>
    <name type="ordered locus">Atu3188</name>
    <name type="ORF">AGR_L_3244</name>
</gene>
<keyword id="KW-0067">ATP-binding</keyword>
<keyword id="KW-0997">Cell inner membrane</keyword>
<keyword id="KW-1003">Cell membrane</keyword>
<keyword id="KW-0472">Membrane</keyword>
<keyword id="KW-0547">Nucleotide-binding</keyword>
<keyword id="KW-1185">Reference proteome</keyword>
<keyword id="KW-0762">Sugar transport</keyword>
<keyword id="KW-1278">Translocase</keyword>
<keyword id="KW-0813">Transport</keyword>
<name>UGPC3_AGRFC</name>
<organism>
    <name type="scientific">Agrobacterium fabrum (strain C58 / ATCC 33970)</name>
    <name type="common">Agrobacterium tumefaciens (strain C58)</name>
    <dbReference type="NCBI Taxonomy" id="176299"/>
    <lineage>
        <taxon>Bacteria</taxon>
        <taxon>Pseudomonadati</taxon>
        <taxon>Pseudomonadota</taxon>
        <taxon>Alphaproteobacteria</taxon>
        <taxon>Hyphomicrobiales</taxon>
        <taxon>Rhizobiaceae</taxon>
        <taxon>Rhizobium/Agrobacterium group</taxon>
        <taxon>Agrobacterium</taxon>
        <taxon>Agrobacterium tumefaciens complex</taxon>
    </lineage>
</organism>
<proteinExistence type="inferred from homology"/>
<sequence length="353" mass="38302">MAKIALKDVRKVYGGNVEAIKSVSMEIADGEMIVLVGPSGCGKSTLLRMIAGLEGISGGQIMIGDRVVNDLEPSDRDIAMVFQNYALYPHMTVRQNLAYGLKNRNTPKEEIERRITEAAKALEIEQFLERKPRQLSGGQRQRVAMGRAIVRKPAAFLFDEPLSNLDAKLRVQMRVEIRRLQRSLATTSVYVTHDQMEAMTLADRLVVLNAGRIEQMGTPIELYEKPATTFVATFIGSPSMNLLAHGAASSNVSAGWSVNAAAALPPTVATLGIRPEDITLAEAEPADAAFAGTVQVDAVELVGAESYVHGSFPDGTTIVFRVPGRSQLRIGEMLKIAAQAKDFHLFDAAGKRI</sequence>
<feature type="chain" id="PRO_0000289725" description="sn-glycerol-3-phosphate import ATP-binding protein UgpC 3">
    <location>
        <begin position="1"/>
        <end position="353"/>
    </location>
</feature>
<feature type="domain" description="ABC transporter" evidence="1">
    <location>
        <begin position="4"/>
        <end position="235"/>
    </location>
</feature>
<feature type="binding site" evidence="1">
    <location>
        <begin position="37"/>
        <end position="44"/>
    </location>
    <ligand>
        <name>ATP</name>
        <dbReference type="ChEBI" id="CHEBI:30616"/>
    </ligand>
</feature>